<comment type="function">
    <text evidence="1 6">E3 ubiquitin-protein ligase that plays a key role in the RNF14-RNF25 translation quality control pathway, a pathway that takes place when a ribosome has stalled during translation, and which promotes ubiquitination and degradation of translation factors on stalled ribosomes (By similarity). Recruited to stalled ribosomes by the ribosome collision sensor GCN1 and mediates 'Lys-6'-linked ubiquitination of target proteins, leading to their degradation (By similarity). Mediates ubiquitination of eef1a1/eEF1A and etf1/eRF1 translation factors on stalled ribosomes, leading to their degradation (By similarity). Specifically required to resolve RNA-protein cross-links caused by reactive aldehydes, which trigger translation stress by stalling ribosomes: acts by catalying 'Lys-6'-linked ubiquitination of RNA-protein cross-links, leading to their removal by the ATP-dependent unfoldase VCP and subsequent degradation by the proteasome (By similarity). Independently of its function in the response to stalled ribosomes, acts as a regulator of transcription in Wnt signaling via its interaction with TCF transcription factors (tcf7/tcf1, tcf7l1/tcf3 and tcf7l2/tcf4) (PubMed:23449499).</text>
</comment>
<comment type="catalytic activity">
    <reaction evidence="1">
        <text>[E2 ubiquitin-conjugating enzyme]-S-ubiquitinyl-L-cysteine + [acceptor protein]-L-lysine = [E2 ubiquitin-conjugating enzyme]-L-cysteine + [acceptor protein]-N(6)-ubiquitinyl-L-lysine.</text>
        <dbReference type="EC" id="2.3.2.31"/>
    </reaction>
</comment>
<comment type="pathway">
    <text evidence="1">Protein modification; protein ubiquitination.</text>
</comment>
<comment type="subcellular location">
    <subcellularLocation>
        <location evidence="1">Cytoplasm</location>
    </subcellularLocation>
    <subcellularLocation>
        <location evidence="1">Nucleus</location>
    </subcellularLocation>
</comment>
<comment type="similarity">
    <text evidence="8">Belongs to the RBR family. RNF14 subfamily.</text>
</comment>
<evidence type="ECO:0000250" key="1">
    <source>
        <dbReference type="UniProtKB" id="Q9UBS8"/>
    </source>
</evidence>
<evidence type="ECO:0000255" key="2">
    <source>
        <dbReference type="PROSITE-ProRule" id="PRU00175"/>
    </source>
</evidence>
<evidence type="ECO:0000255" key="3">
    <source>
        <dbReference type="PROSITE-ProRule" id="PRU00179"/>
    </source>
</evidence>
<evidence type="ECO:0000255" key="4">
    <source>
        <dbReference type="PROSITE-ProRule" id="PRU01221"/>
    </source>
</evidence>
<evidence type="ECO:0000256" key="5">
    <source>
        <dbReference type="SAM" id="MobiDB-lite"/>
    </source>
</evidence>
<evidence type="ECO:0000269" key="6">
    <source>
    </source>
</evidence>
<evidence type="ECO:0000303" key="7">
    <source>
    </source>
</evidence>
<evidence type="ECO:0000305" key="8"/>
<protein>
    <recommendedName>
        <fullName evidence="8">E3 ubiquitin-protein ligase RNF14</fullName>
        <ecNumber evidence="1">2.3.2.31</ecNumber>
    </recommendedName>
    <alternativeName>
        <fullName evidence="8">RING finger protein 14</fullName>
    </alternativeName>
</protein>
<dbReference type="EC" id="2.3.2.31" evidence="1"/>
<dbReference type="EMBL" id="CU459117">
    <property type="status" value="NOT_ANNOTATED_CDS"/>
    <property type="molecule type" value="Genomic_DNA"/>
</dbReference>
<dbReference type="EMBL" id="CU459208">
    <property type="status" value="NOT_ANNOTATED_CDS"/>
    <property type="molecule type" value="Genomic_DNA"/>
</dbReference>
<dbReference type="EMBL" id="BC071542">
    <property type="protein sequence ID" value="AAH71542.1"/>
    <property type="molecule type" value="mRNA"/>
</dbReference>
<dbReference type="RefSeq" id="NP_001002087.1">
    <property type="nucleotide sequence ID" value="NM_001002087.1"/>
</dbReference>
<dbReference type="RefSeq" id="XP_005161507.1">
    <property type="nucleotide sequence ID" value="XM_005161450.4"/>
</dbReference>
<dbReference type="FunCoup" id="F1RB95">
    <property type="interactions" value="884"/>
</dbReference>
<dbReference type="STRING" id="7955.ENSDARP00000017558"/>
<dbReference type="PaxDb" id="7955-ENSDARP00000017558"/>
<dbReference type="Ensembl" id="ENSDART00000010942">
    <property type="protein sequence ID" value="ENSDARP00000017558"/>
    <property type="gene ID" value="ENSDARG00000043905"/>
</dbReference>
<dbReference type="Ensembl" id="ENSDART00000157974">
    <property type="protein sequence ID" value="ENSDARP00000134390"/>
    <property type="gene ID" value="ENSDARG00000043905"/>
</dbReference>
<dbReference type="GeneID" id="415177"/>
<dbReference type="KEGG" id="dre:415177"/>
<dbReference type="AGR" id="ZFIN:ZDB-GENE-040625-65"/>
<dbReference type="CTD" id="9604"/>
<dbReference type="ZFIN" id="ZDB-GENE-040625-65">
    <property type="gene designation" value="rnf14"/>
</dbReference>
<dbReference type="eggNOG" id="KOG1814">
    <property type="taxonomic scope" value="Eukaryota"/>
</dbReference>
<dbReference type="HOGENOM" id="CLU_021364_2_0_1"/>
<dbReference type="InParanoid" id="F1RB95"/>
<dbReference type="OMA" id="PRSWCQG"/>
<dbReference type="OrthoDB" id="1431934at2759"/>
<dbReference type="TreeFam" id="TF314401"/>
<dbReference type="Reactome" id="R-DRE-983168">
    <property type="pathway name" value="Antigen processing: Ubiquitination &amp; Proteasome degradation"/>
</dbReference>
<dbReference type="UniPathway" id="UPA00143"/>
<dbReference type="PRO" id="PR:F1RB95"/>
<dbReference type="Proteomes" id="UP000000437">
    <property type="component" value="Chromosome 21"/>
</dbReference>
<dbReference type="Bgee" id="ENSDARG00000043905">
    <property type="expression patterns" value="Expressed in muscle tissue and 23 other cell types or tissues"/>
</dbReference>
<dbReference type="ExpressionAtlas" id="F1RB95">
    <property type="expression patterns" value="baseline"/>
</dbReference>
<dbReference type="GO" id="GO:0005737">
    <property type="term" value="C:cytoplasm"/>
    <property type="evidence" value="ECO:0000318"/>
    <property type="project" value="GO_Central"/>
</dbReference>
<dbReference type="GO" id="GO:0005634">
    <property type="term" value="C:nucleus"/>
    <property type="evidence" value="ECO:0007669"/>
    <property type="project" value="UniProtKB-SubCell"/>
</dbReference>
<dbReference type="GO" id="GO:0000151">
    <property type="term" value="C:ubiquitin ligase complex"/>
    <property type="evidence" value="ECO:0000318"/>
    <property type="project" value="GO_Central"/>
</dbReference>
<dbReference type="GO" id="GO:0031624">
    <property type="term" value="F:ubiquitin conjugating enzyme binding"/>
    <property type="evidence" value="ECO:0000318"/>
    <property type="project" value="GO_Central"/>
</dbReference>
<dbReference type="GO" id="GO:0061630">
    <property type="term" value="F:ubiquitin protein ligase activity"/>
    <property type="evidence" value="ECO:0000250"/>
    <property type="project" value="UniProtKB"/>
</dbReference>
<dbReference type="GO" id="GO:0008270">
    <property type="term" value="F:zinc ion binding"/>
    <property type="evidence" value="ECO:0007669"/>
    <property type="project" value="UniProtKB-KW"/>
</dbReference>
<dbReference type="GO" id="GO:0016567">
    <property type="term" value="P:protein ubiquitination"/>
    <property type="evidence" value="ECO:0007669"/>
    <property type="project" value="UniProtKB-UniPathway"/>
</dbReference>
<dbReference type="GO" id="GO:0160127">
    <property type="term" value="P:protein-RNA covalent cross-linking repair"/>
    <property type="evidence" value="ECO:0000250"/>
    <property type="project" value="UniProtKB"/>
</dbReference>
<dbReference type="GO" id="GO:0060828">
    <property type="term" value="P:regulation of canonical Wnt signaling pathway"/>
    <property type="evidence" value="ECO:0000314"/>
    <property type="project" value="ZFIN"/>
</dbReference>
<dbReference type="GO" id="GO:0072344">
    <property type="term" value="P:rescue of stalled ribosome"/>
    <property type="evidence" value="ECO:0000250"/>
    <property type="project" value="UniProtKB"/>
</dbReference>
<dbReference type="GO" id="GO:0006511">
    <property type="term" value="P:ubiquitin-dependent protein catabolic process"/>
    <property type="evidence" value="ECO:0000318"/>
    <property type="project" value="GO_Central"/>
</dbReference>
<dbReference type="CDD" id="cd20341">
    <property type="entry name" value="BRcat_RBR_RNF14"/>
    <property type="match status" value="1"/>
</dbReference>
<dbReference type="CDD" id="cd20354">
    <property type="entry name" value="Rcat_RBR_RNF14"/>
    <property type="match status" value="1"/>
</dbReference>
<dbReference type="CDD" id="cd16628">
    <property type="entry name" value="RING-HC_RBR_RNF14"/>
    <property type="match status" value="1"/>
</dbReference>
<dbReference type="CDD" id="cd23820">
    <property type="entry name" value="RWD_RNF14"/>
    <property type="match status" value="1"/>
</dbReference>
<dbReference type="FunFam" id="3.10.110.10:FF:000049">
    <property type="entry name" value="RBR-type E3 ubiquitin transferase"/>
    <property type="match status" value="1"/>
</dbReference>
<dbReference type="FunFam" id="3.30.40.10:FF:000186">
    <property type="entry name" value="RBR-type E3 ubiquitin transferase"/>
    <property type="match status" value="1"/>
</dbReference>
<dbReference type="Gene3D" id="1.20.120.1750">
    <property type="match status" value="1"/>
</dbReference>
<dbReference type="Gene3D" id="2.20.25.20">
    <property type="match status" value="1"/>
</dbReference>
<dbReference type="Gene3D" id="3.10.110.10">
    <property type="entry name" value="Ubiquitin Conjugating Enzyme"/>
    <property type="match status" value="1"/>
</dbReference>
<dbReference type="Gene3D" id="3.30.40.10">
    <property type="entry name" value="Zinc/RING finger domain, C3HC4 (zinc finger)"/>
    <property type="match status" value="1"/>
</dbReference>
<dbReference type="InterPro" id="IPR031127">
    <property type="entry name" value="E3_UB_ligase_RBR"/>
</dbReference>
<dbReference type="InterPro" id="IPR002867">
    <property type="entry name" value="IBR_dom"/>
</dbReference>
<dbReference type="InterPro" id="IPR047548">
    <property type="entry name" value="Rcat_RBR_RNF14"/>
</dbReference>
<dbReference type="InterPro" id="IPR031128">
    <property type="entry name" value="RNF14_RING-HC_Zfn"/>
</dbReference>
<dbReference type="InterPro" id="IPR006575">
    <property type="entry name" value="RWD_dom"/>
</dbReference>
<dbReference type="InterPro" id="IPR044066">
    <property type="entry name" value="TRIAD_supradom"/>
</dbReference>
<dbReference type="InterPro" id="IPR016135">
    <property type="entry name" value="UBQ-conjugating_enzyme/RWD"/>
</dbReference>
<dbReference type="InterPro" id="IPR001841">
    <property type="entry name" value="Znf_RING"/>
</dbReference>
<dbReference type="InterPro" id="IPR013083">
    <property type="entry name" value="Znf_RING/FYVE/PHD"/>
</dbReference>
<dbReference type="InterPro" id="IPR017907">
    <property type="entry name" value="Znf_RING_CS"/>
</dbReference>
<dbReference type="PANTHER" id="PTHR11685">
    <property type="entry name" value="RBR FAMILY RING FINGER AND IBR DOMAIN-CONTAINING"/>
    <property type="match status" value="1"/>
</dbReference>
<dbReference type="Pfam" id="PF01485">
    <property type="entry name" value="IBR"/>
    <property type="match status" value="1"/>
</dbReference>
<dbReference type="Pfam" id="PF22191">
    <property type="entry name" value="IBR_1"/>
    <property type="match status" value="1"/>
</dbReference>
<dbReference type="Pfam" id="PF05773">
    <property type="entry name" value="RWD"/>
    <property type="match status" value="1"/>
</dbReference>
<dbReference type="SMART" id="SM00647">
    <property type="entry name" value="IBR"/>
    <property type="match status" value="2"/>
</dbReference>
<dbReference type="SMART" id="SM00591">
    <property type="entry name" value="RWD"/>
    <property type="match status" value="1"/>
</dbReference>
<dbReference type="SUPFAM" id="SSF57850">
    <property type="entry name" value="RING/U-box"/>
    <property type="match status" value="3"/>
</dbReference>
<dbReference type="SUPFAM" id="SSF54495">
    <property type="entry name" value="UBC-like"/>
    <property type="match status" value="1"/>
</dbReference>
<dbReference type="PROSITE" id="PS50908">
    <property type="entry name" value="RWD"/>
    <property type="match status" value="1"/>
</dbReference>
<dbReference type="PROSITE" id="PS51873">
    <property type="entry name" value="TRIAD"/>
    <property type="match status" value="1"/>
</dbReference>
<dbReference type="PROSITE" id="PS00518">
    <property type="entry name" value="ZF_RING_1"/>
    <property type="match status" value="1"/>
</dbReference>
<dbReference type="PROSITE" id="PS50089">
    <property type="entry name" value="ZF_RING_2"/>
    <property type="match status" value="1"/>
</dbReference>
<name>RNF14_DANRE</name>
<accession>F1RB95</accession>
<accession>A0A8M2B8B6</accession>
<accession>Q6IQ68</accession>
<sequence>MSADQEAKEDELLALASIYDEEEFHRAESGKEGEIHLCLELPPNFKLLVKGQKSAEHNISFLPPLVLSFDLPDDYPSTSAPIFTISSKWLTRVQITALCRKLDELWEENQGNVVLFTWIQFLKEETLDFLGIQSPLEIQRSGSQPQCEPAQKHAADASGEKSKVQDLDPRAVQEVDAQTDILTQLLDFDEAQKQRVFDGKAFCCGICYSEKLGCDCLLFKECEHVYCKACIKEYFQIQIKDGKVQCLNCPEPKCASTATPTQVKLLVGEDEFARYDRLLLQSSLDLMADVVYCPRMSCCMAVMVEPDSTMGICPSCRYAFCTLCRRSYHGLSHCIATADELRSLRDEYLSSSEEGKKFLEKRFGKRVIQRAVEESFSTDWLKTNCKQCPCCGTNIQKAHGCNKMTCSSCQKYFCWICLGALSRVNPYSHFNNPDSPCYNQLFHGMEMEEDEAFGSDEDD</sequence>
<reference key="1">
    <citation type="journal article" date="2013" name="Nature">
        <title>The zebrafish reference genome sequence and its relationship to the human genome.</title>
        <authorList>
            <person name="Howe K."/>
            <person name="Clark M.D."/>
            <person name="Torroja C.F."/>
            <person name="Torrance J."/>
            <person name="Berthelot C."/>
            <person name="Muffato M."/>
            <person name="Collins J.E."/>
            <person name="Humphray S."/>
            <person name="McLaren K."/>
            <person name="Matthews L."/>
            <person name="McLaren S."/>
            <person name="Sealy I."/>
            <person name="Caccamo M."/>
            <person name="Churcher C."/>
            <person name="Scott C."/>
            <person name="Barrett J.C."/>
            <person name="Koch R."/>
            <person name="Rauch G.J."/>
            <person name="White S."/>
            <person name="Chow W."/>
            <person name="Kilian B."/>
            <person name="Quintais L.T."/>
            <person name="Guerra-Assuncao J.A."/>
            <person name="Zhou Y."/>
            <person name="Gu Y."/>
            <person name="Yen J."/>
            <person name="Vogel J.H."/>
            <person name="Eyre T."/>
            <person name="Redmond S."/>
            <person name="Banerjee R."/>
            <person name="Chi J."/>
            <person name="Fu B."/>
            <person name="Langley E."/>
            <person name="Maguire S.F."/>
            <person name="Laird G.K."/>
            <person name="Lloyd D."/>
            <person name="Kenyon E."/>
            <person name="Donaldson S."/>
            <person name="Sehra H."/>
            <person name="Almeida-King J."/>
            <person name="Loveland J."/>
            <person name="Trevanion S."/>
            <person name="Jones M."/>
            <person name="Quail M."/>
            <person name="Willey D."/>
            <person name="Hunt A."/>
            <person name="Burton J."/>
            <person name="Sims S."/>
            <person name="McLay K."/>
            <person name="Plumb B."/>
            <person name="Davis J."/>
            <person name="Clee C."/>
            <person name="Oliver K."/>
            <person name="Clark R."/>
            <person name="Riddle C."/>
            <person name="Elliot D."/>
            <person name="Threadgold G."/>
            <person name="Harden G."/>
            <person name="Ware D."/>
            <person name="Begum S."/>
            <person name="Mortimore B."/>
            <person name="Kerry G."/>
            <person name="Heath P."/>
            <person name="Phillimore B."/>
            <person name="Tracey A."/>
            <person name="Corby N."/>
            <person name="Dunn M."/>
            <person name="Johnson C."/>
            <person name="Wood J."/>
            <person name="Clark S."/>
            <person name="Pelan S."/>
            <person name="Griffiths G."/>
            <person name="Smith M."/>
            <person name="Glithero R."/>
            <person name="Howden P."/>
            <person name="Barker N."/>
            <person name="Lloyd C."/>
            <person name="Stevens C."/>
            <person name="Harley J."/>
            <person name="Holt K."/>
            <person name="Panagiotidis G."/>
            <person name="Lovell J."/>
            <person name="Beasley H."/>
            <person name="Henderson C."/>
            <person name="Gordon D."/>
            <person name="Auger K."/>
            <person name="Wright D."/>
            <person name="Collins J."/>
            <person name="Raisen C."/>
            <person name="Dyer L."/>
            <person name="Leung K."/>
            <person name="Robertson L."/>
            <person name="Ambridge K."/>
            <person name="Leongamornlert D."/>
            <person name="McGuire S."/>
            <person name="Gilderthorp R."/>
            <person name="Griffiths C."/>
            <person name="Manthravadi D."/>
            <person name="Nichol S."/>
            <person name="Barker G."/>
            <person name="Whitehead S."/>
            <person name="Kay M."/>
            <person name="Brown J."/>
            <person name="Murnane C."/>
            <person name="Gray E."/>
            <person name="Humphries M."/>
            <person name="Sycamore N."/>
            <person name="Barker D."/>
            <person name="Saunders D."/>
            <person name="Wallis J."/>
            <person name="Babbage A."/>
            <person name="Hammond S."/>
            <person name="Mashreghi-Mohammadi M."/>
            <person name="Barr L."/>
            <person name="Martin S."/>
            <person name="Wray P."/>
            <person name="Ellington A."/>
            <person name="Matthews N."/>
            <person name="Ellwood M."/>
            <person name="Woodmansey R."/>
            <person name="Clark G."/>
            <person name="Cooper J."/>
            <person name="Tromans A."/>
            <person name="Grafham D."/>
            <person name="Skuce C."/>
            <person name="Pandian R."/>
            <person name="Andrews R."/>
            <person name="Harrison E."/>
            <person name="Kimberley A."/>
            <person name="Garnett J."/>
            <person name="Fosker N."/>
            <person name="Hall R."/>
            <person name="Garner P."/>
            <person name="Kelly D."/>
            <person name="Bird C."/>
            <person name="Palmer S."/>
            <person name="Gehring I."/>
            <person name="Berger A."/>
            <person name="Dooley C.M."/>
            <person name="Ersan-Urun Z."/>
            <person name="Eser C."/>
            <person name="Geiger H."/>
            <person name="Geisler M."/>
            <person name="Karotki L."/>
            <person name="Kirn A."/>
            <person name="Konantz J."/>
            <person name="Konantz M."/>
            <person name="Oberlander M."/>
            <person name="Rudolph-Geiger S."/>
            <person name="Teucke M."/>
            <person name="Lanz C."/>
            <person name="Raddatz G."/>
            <person name="Osoegawa K."/>
            <person name="Zhu B."/>
            <person name="Rapp A."/>
            <person name="Widaa S."/>
            <person name="Langford C."/>
            <person name="Yang F."/>
            <person name="Schuster S.C."/>
            <person name="Carter N.P."/>
            <person name="Harrow J."/>
            <person name="Ning Z."/>
            <person name="Herrero J."/>
            <person name="Searle S.M."/>
            <person name="Enright A."/>
            <person name="Geisler R."/>
            <person name="Plasterk R.H."/>
            <person name="Lee C."/>
            <person name="Westerfield M."/>
            <person name="de Jong P.J."/>
            <person name="Zon L.I."/>
            <person name="Postlethwait J.H."/>
            <person name="Nusslein-Volhard C."/>
            <person name="Hubbard T.J."/>
            <person name="Roest Crollius H."/>
            <person name="Rogers J."/>
            <person name="Stemple D.L."/>
        </authorList>
    </citation>
    <scope>NUCLEOTIDE SEQUENCE [LARGE SCALE GENOMIC DNA]</scope>
    <source>
        <strain>Tuebingen</strain>
    </source>
</reference>
<reference key="2">
    <citation type="submission" date="2004-06" db="EMBL/GenBank/DDBJ databases">
        <authorList>
            <consortium name="NIH - Zebrafish Gene Collection (ZGC) project"/>
        </authorList>
    </citation>
    <scope>NUCLEOTIDE SEQUENCE [LARGE SCALE MRNA]</scope>
    <source>
        <tissue>Embryo</tissue>
    </source>
</reference>
<reference key="3">
    <citation type="journal article" date="2013" name="EMBO Rep.">
        <title>Ring Finger Protein 14 is a new regulator of TCF/beta-catenin-mediated transcription and colon cancer cell survival.</title>
        <authorList>
            <person name="Wu B."/>
            <person name="Piloto S."/>
            <person name="Zeng W."/>
            <person name="Hoverter N.P."/>
            <person name="Schilling T.F."/>
            <person name="Waterman M.L."/>
        </authorList>
    </citation>
    <scope>FUNCTION</scope>
</reference>
<feature type="chain" id="PRO_0000458095" description="E3 ubiquitin-protein ligase RNF14">
    <location>
        <begin position="1"/>
        <end position="459"/>
    </location>
</feature>
<feature type="domain" description="RWD" evidence="3">
    <location>
        <begin position="10"/>
        <end position="129"/>
    </location>
</feature>
<feature type="zinc finger region" description="RING-type 1" evidence="4">
    <location>
        <begin position="204"/>
        <end position="254"/>
    </location>
</feature>
<feature type="zinc finger region" description="RING-type 3" evidence="2">
    <location>
        <begin position="204"/>
        <end position="249"/>
    </location>
</feature>
<feature type="zinc finger region" description="IBR-type" evidence="4">
    <location>
        <begin position="273"/>
        <end position="334"/>
    </location>
</feature>
<feature type="zinc finger region" description="RING-type 2; atypical" evidence="4">
    <location>
        <begin position="388"/>
        <end position="417"/>
    </location>
</feature>
<feature type="region of interest" description="Disordered" evidence="5">
    <location>
        <begin position="141"/>
        <end position="169"/>
    </location>
</feature>
<feature type="region of interest" description="TRIAD supradomain" evidence="4">
    <location>
        <begin position="200"/>
        <end position="441"/>
    </location>
</feature>
<feature type="compositionally biased region" description="Basic and acidic residues" evidence="5">
    <location>
        <begin position="150"/>
        <end position="169"/>
    </location>
</feature>
<feature type="active site" evidence="4">
    <location>
        <position position="401"/>
    </location>
</feature>
<feature type="binding site" evidence="4">
    <location>
        <position position="204"/>
    </location>
    <ligand>
        <name>Zn(2+)</name>
        <dbReference type="ChEBI" id="CHEBI:29105"/>
        <label>1</label>
    </ligand>
</feature>
<feature type="binding site" evidence="4">
    <location>
        <position position="207"/>
    </location>
    <ligand>
        <name>Zn(2+)</name>
        <dbReference type="ChEBI" id="CHEBI:29105"/>
        <label>1</label>
    </ligand>
</feature>
<feature type="binding site" evidence="4">
    <location>
        <position position="222"/>
    </location>
    <ligand>
        <name>Zn(2+)</name>
        <dbReference type="ChEBI" id="CHEBI:29105"/>
        <label>2</label>
    </ligand>
</feature>
<feature type="binding site" evidence="4">
    <location>
        <position position="224"/>
    </location>
    <ligand>
        <name>Zn(2+)</name>
        <dbReference type="ChEBI" id="CHEBI:29105"/>
        <label>2</label>
    </ligand>
</feature>
<feature type="binding site" evidence="4">
    <location>
        <position position="227"/>
    </location>
    <ligand>
        <name>Zn(2+)</name>
        <dbReference type="ChEBI" id="CHEBI:29105"/>
        <label>1</label>
    </ligand>
</feature>
<feature type="binding site" evidence="4">
    <location>
        <position position="230"/>
    </location>
    <ligand>
        <name>Zn(2+)</name>
        <dbReference type="ChEBI" id="CHEBI:29105"/>
        <label>1</label>
    </ligand>
</feature>
<feature type="binding site" evidence="4">
    <location>
        <position position="249"/>
    </location>
    <ligand>
        <name>Zn(2+)</name>
        <dbReference type="ChEBI" id="CHEBI:29105"/>
        <label>2</label>
    </ligand>
</feature>
<feature type="binding site" evidence="4">
    <location>
        <position position="254"/>
    </location>
    <ligand>
        <name>Zn(2+)</name>
        <dbReference type="ChEBI" id="CHEBI:29105"/>
        <label>2</label>
    </ligand>
</feature>
<feature type="binding site" evidence="4">
    <location>
        <position position="293"/>
    </location>
    <ligand>
        <name>Zn(2+)</name>
        <dbReference type="ChEBI" id="CHEBI:29105"/>
        <label>3</label>
    </ligand>
</feature>
<feature type="binding site" evidence="4">
    <location>
        <position position="298"/>
    </location>
    <ligand>
        <name>Zn(2+)</name>
        <dbReference type="ChEBI" id="CHEBI:29105"/>
        <label>3</label>
    </ligand>
</feature>
<feature type="binding site" evidence="4">
    <location>
        <position position="313"/>
    </location>
    <ligand>
        <name>Zn(2+)</name>
        <dbReference type="ChEBI" id="CHEBI:29105"/>
        <label>3</label>
    </ligand>
</feature>
<feature type="binding site" evidence="4">
    <location>
        <position position="316"/>
    </location>
    <ligand>
        <name>Zn(2+)</name>
        <dbReference type="ChEBI" id="CHEBI:29105"/>
        <label>3</label>
    </ligand>
</feature>
<feature type="binding site" evidence="4">
    <location>
        <position position="321"/>
    </location>
    <ligand>
        <name>Zn(2+)</name>
        <dbReference type="ChEBI" id="CHEBI:29105"/>
        <label>4</label>
    </ligand>
</feature>
<feature type="binding site" evidence="4">
    <location>
        <position position="324"/>
    </location>
    <ligand>
        <name>Zn(2+)</name>
        <dbReference type="ChEBI" id="CHEBI:29105"/>
        <label>4</label>
    </ligand>
</feature>
<feature type="binding site" evidence="4">
    <location>
        <position position="329"/>
    </location>
    <ligand>
        <name>Zn(2+)</name>
        <dbReference type="ChEBI" id="CHEBI:29105"/>
        <label>4</label>
    </ligand>
</feature>
<feature type="binding site" evidence="4">
    <location>
        <position position="334"/>
    </location>
    <ligand>
        <name>Zn(2+)</name>
        <dbReference type="ChEBI" id="CHEBI:29105"/>
        <label>4</label>
    </ligand>
</feature>
<feature type="binding site" evidence="4">
    <location>
        <position position="388"/>
    </location>
    <ligand>
        <name>Zn(2+)</name>
        <dbReference type="ChEBI" id="CHEBI:29105"/>
        <label>5</label>
    </ligand>
</feature>
<feature type="binding site" evidence="4">
    <location>
        <position position="391"/>
    </location>
    <ligand>
        <name>Zn(2+)</name>
        <dbReference type="ChEBI" id="CHEBI:29105"/>
        <label>5</label>
    </ligand>
</feature>
<feature type="binding site" evidence="4">
    <location>
        <position position="406"/>
    </location>
    <ligand>
        <name>Zn(2+)</name>
        <dbReference type="ChEBI" id="CHEBI:29105"/>
        <label>5</label>
    </ligand>
</feature>
<feature type="binding site" evidence="4">
    <location>
        <position position="409"/>
    </location>
    <ligand>
        <name>Zn(2+)</name>
        <dbReference type="ChEBI" id="CHEBI:29105"/>
        <label>5</label>
    </ligand>
</feature>
<feature type="binding site" evidence="4">
    <location>
        <position position="414"/>
    </location>
    <ligand>
        <name>Zn(2+)</name>
        <dbReference type="ChEBI" id="CHEBI:29105"/>
        <label>6</label>
    </ligand>
</feature>
<feature type="binding site" evidence="4">
    <location>
        <position position="417"/>
    </location>
    <ligand>
        <name>Zn(2+)</name>
        <dbReference type="ChEBI" id="CHEBI:29105"/>
        <label>6</label>
    </ligand>
</feature>
<feature type="binding site" evidence="4">
    <location>
        <position position="429"/>
    </location>
    <ligand>
        <name>Zn(2+)</name>
        <dbReference type="ChEBI" id="CHEBI:29105"/>
        <label>6</label>
    </ligand>
</feature>
<feature type="binding site" evidence="4">
    <location>
        <position position="437"/>
    </location>
    <ligand>
        <name>Zn(2+)</name>
        <dbReference type="ChEBI" id="CHEBI:29105"/>
        <label>6</label>
    </ligand>
</feature>
<feature type="sequence conflict" description="In Ref. 2; AAH71542." evidence="8" ref="2">
    <original>ESG</original>
    <variation>GSA</variation>
    <location>
        <begin position="28"/>
        <end position="30"/>
    </location>
</feature>
<feature type="sequence conflict" description="In Ref. 2; AAH71542." evidence="8" ref="2">
    <original>I</original>
    <variation>V</variation>
    <location>
        <position position="82"/>
    </location>
</feature>
<feature type="sequence conflict" description="In Ref. 2; AAH71542." evidence="8" ref="2">
    <original>V</original>
    <variation>A</variation>
    <location>
        <position position="164"/>
    </location>
</feature>
<gene>
    <name evidence="7" type="primary">rnf14</name>
</gene>
<organism>
    <name type="scientific">Danio rerio</name>
    <name type="common">Zebrafish</name>
    <name type="synonym">Brachydanio rerio</name>
    <dbReference type="NCBI Taxonomy" id="7955"/>
    <lineage>
        <taxon>Eukaryota</taxon>
        <taxon>Metazoa</taxon>
        <taxon>Chordata</taxon>
        <taxon>Craniata</taxon>
        <taxon>Vertebrata</taxon>
        <taxon>Euteleostomi</taxon>
        <taxon>Actinopterygii</taxon>
        <taxon>Neopterygii</taxon>
        <taxon>Teleostei</taxon>
        <taxon>Ostariophysi</taxon>
        <taxon>Cypriniformes</taxon>
        <taxon>Danionidae</taxon>
        <taxon>Danioninae</taxon>
        <taxon>Danio</taxon>
    </lineage>
</organism>
<proteinExistence type="evidence at transcript level"/>
<keyword id="KW-0963">Cytoplasm</keyword>
<keyword id="KW-0479">Metal-binding</keyword>
<keyword id="KW-0539">Nucleus</keyword>
<keyword id="KW-1185">Reference proteome</keyword>
<keyword id="KW-0677">Repeat</keyword>
<keyword id="KW-0804">Transcription</keyword>
<keyword id="KW-0805">Transcription regulation</keyword>
<keyword id="KW-0808">Transferase</keyword>
<keyword id="KW-0833">Ubl conjugation pathway</keyword>
<keyword id="KW-0862">Zinc</keyword>
<keyword id="KW-0863">Zinc-finger</keyword>